<gene>
    <name evidence="1" type="primary">tsf</name>
    <name type="ordered locus">CHAB381_0839</name>
</gene>
<accession>A7I1L2</accession>
<keyword id="KW-0963">Cytoplasm</keyword>
<keyword id="KW-0251">Elongation factor</keyword>
<keyword id="KW-0648">Protein biosynthesis</keyword>
<keyword id="KW-1185">Reference proteome</keyword>
<name>EFTS_CAMHC</name>
<feature type="chain" id="PRO_0000323448" description="Elongation factor Ts">
    <location>
        <begin position="1"/>
        <end position="352"/>
    </location>
</feature>
<feature type="region of interest" description="Involved in Mg(2+) ion dislocation from EF-Tu" evidence="1">
    <location>
        <begin position="81"/>
        <end position="84"/>
    </location>
</feature>
<dbReference type="EMBL" id="CP000776">
    <property type="protein sequence ID" value="ABS50942.1"/>
    <property type="molecule type" value="Genomic_DNA"/>
</dbReference>
<dbReference type="RefSeq" id="WP_012108692.1">
    <property type="nucleotide sequence ID" value="NC_009714.1"/>
</dbReference>
<dbReference type="SMR" id="A7I1L2"/>
<dbReference type="STRING" id="360107.CHAB381_0839"/>
<dbReference type="KEGG" id="cha:CHAB381_0839"/>
<dbReference type="eggNOG" id="COG0264">
    <property type="taxonomic scope" value="Bacteria"/>
</dbReference>
<dbReference type="HOGENOM" id="CLU_047155_0_1_7"/>
<dbReference type="OrthoDB" id="9808348at2"/>
<dbReference type="Proteomes" id="UP000002407">
    <property type="component" value="Chromosome"/>
</dbReference>
<dbReference type="GO" id="GO:0005737">
    <property type="term" value="C:cytoplasm"/>
    <property type="evidence" value="ECO:0007669"/>
    <property type="project" value="UniProtKB-SubCell"/>
</dbReference>
<dbReference type="GO" id="GO:0003746">
    <property type="term" value="F:translation elongation factor activity"/>
    <property type="evidence" value="ECO:0007669"/>
    <property type="project" value="UniProtKB-UniRule"/>
</dbReference>
<dbReference type="CDD" id="cd14275">
    <property type="entry name" value="UBA_EF-Ts"/>
    <property type="match status" value="1"/>
</dbReference>
<dbReference type="FunFam" id="1.10.286.20:FF:000004">
    <property type="entry name" value="Elongation factor Ts"/>
    <property type="match status" value="1"/>
</dbReference>
<dbReference type="FunFam" id="1.10.8.10:FF:000001">
    <property type="entry name" value="Elongation factor Ts"/>
    <property type="match status" value="1"/>
</dbReference>
<dbReference type="Gene3D" id="1.10.286.20">
    <property type="match status" value="1"/>
</dbReference>
<dbReference type="Gene3D" id="1.10.8.10">
    <property type="entry name" value="DNA helicase RuvA subunit, C-terminal domain"/>
    <property type="match status" value="1"/>
</dbReference>
<dbReference type="Gene3D" id="3.30.479.20">
    <property type="entry name" value="Elongation factor Ts, dimerisation domain"/>
    <property type="match status" value="2"/>
</dbReference>
<dbReference type="HAMAP" id="MF_00050">
    <property type="entry name" value="EF_Ts"/>
    <property type="match status" value="1"/>
</dbReference>
<dbReference type="InterPro" id="IPR036402">
    <property type="entry name" value="EF-Ts_dimer_sf"/>
</dbReference>
<dbReference type="InterPro" id="IPR001816">
    <property type="entry name" value="Transl_elong_EFTs/EF1B"/>
</dbReference>
<dbReference type="InterPro" id="IPR014039">
    <property type="entry name" value="Transl_elong_EFTs/EF1B_dimer"/>
</dbReference>
<dbReference type="InterPro" id="IPR018101">
    <property type="entry name" value="Transl_elong_Ts_CS"/>
</dbReference>
<dbReference type="InterPro" id="IPR009060">
    <property type="entry name" value="UBA-like_sf"/>
</dbReference>
<dbReference type="NCBIfam" id="TIGR00116">
    <property type="entry name" value="tsf"/>
    <property type="match status" value="2"/>
</dbReference>
<dbReference type="PANTHER" id="PTHR11741">
    <property type="entry name" value="ELONGATION FACTOR TS"/>
    <property type="match status" value="1"/>
</dbReference>
<dbReference type="PANTHER" id="PTHR11741:SF0">
    <property type="entry name" value="ELONGATION FACTOR TS, MITOCHONDRIAL"/>
    <property type="match status" value="1"/>
</dbReference>
<dbReference type="Pfam" id="PF00889">
    <property type="entry name" value="EF_TS"/>
    <property type="match status" value="2"/>
</dbReference>
<dbReference type="SUPFAM" id="SSF54713">
    <property type="entry name" value="Elongation factor Ts (EF-Ts), dimerisation domain"/>
    <property type="match status" value="3"/>
</dbReference>
<dbReference type="SUPFAM" id="SSF46934">
    <property type="entry name" value="UBA-like"/>
    <property type="match status" value="1"/>
</dbReference>
<dbReference type="PROSITE" id="PS01126">
    <property type="entry name" value="EF_TS_1"/>
    <property type="match status" value="1"/>
</dbReference>
<dbReference type="PROSITE" id="PS01127">
    <property type="entry name" value="EF_TS_2"/>
    <property type="match status" value="1"/>
</dbReference>
<comment type="function">
    <text evidence="1">Associates with the EF-Tu.GDP complex and induces the exchange of GDP to GTP. It remains bound to the aminoacyl-tRNA.EF-Tu.GTP complex up to the GTP hydrolysis stage on the ribosome.</text>
</comment>
<comment type="subcellular location">
    <subcellularLocation>
        <location evidence="1">Cytoplasm</location>
    </subcellularLocation>
</comment>
<comment type="similarity">
    <text evidence="1">Belongs to the EF-Ts family.</text>
</comment>
<organism>
    <name type="scientific">Campylobacter hominis (strain ATCC BAA-381 / DSM 21671 / CCUG 45161 / LMG 19568 / NCTC 13146 / CH001A)</name>
    <dbReference type="NCBI Taxonomy" id="360107"/>
    <lineage>
        <taxon>Bacteria</taxon>
        <taxon>Pseudomonadati</taxon>
        <taxon>Campylobacterota</taxon>
        <taxon>Epsilonproteobacteria</taxon>
        <taxon>Campylobacterales</taxon>
        <taxon>Campylobacteraceae</taxon>
        <taxon>Campylobacter</taxon>
    </lineage>
</organism>
<protein>
    <recommendedName>
        <fullName evidence="1">Elongation factor Ts</fullName>
        <shortName evidence="1">EF-Ts</shortName>
    </recommendedName>
</protein>
<sequence length="352" mass="39296">MQITAKMVKDLRESTGAGMMDCKKALVEANGDMEQAIKVLHEKGLGKAAKKADRLASEGLVCVLVNSDFSKATISEINSETDFVAKNDKFINFVNNTTKHIQDSNITNVEALNNSLINGEKFSDFITNQIATIGENLVVRRFNTINANGGVLNGYLHSNSRVGVIISATCENVDRKKAADFIYQLCMHAAAMKPSVISYKEFNPDFLKSELTALKAELEKENEELKRLGKPLNHIPEFASRAQISDEIIEKEKEKIRAELKKEGKPEKIWDKIIPGKLERFLADNTLLDQRLTLLGQFFVMDDKKTIEQVIDEKSKEFGGKITITNYIRYEVGEGLEKKSEDFAAEVAAQIG</sequence>
<reference key="1">
    <citation type="submission" date="2007-07" db="EMBL/GenBank/DDBJ databases">
        <title>Complete genome sequence of Campylobacter hominis ATCC BAA-381, a commensal isolated from the human gastrointestinal tract.</title>
        <authorList>
            <person name="Fouts D.E."/>
            <person name="Mongodin E.F."/>
            <person name="Puiu D."/>
            <person name="Sebastian Y."/>
            <person name="Miller W.G."/>
            <person name="Mandrell R.E."/>
            <person name="Nelson K.E."/>
        </authorList>
    </citation>
    <scope>NUCLEOTIDE SEQUENCE [LARGE SCALE GENOMIC DNA]</scope>
    <source>
        <strain>ATCC BAA-381 / DSM 21671 / CCUG 45161 / LMG 19568 / NCTC 13146 / CH001A</strain>
    </source>
</reference>
<proteinExistence type="inferred from homology"/>
<evidence type="ECO:0000255" key="1">
    <source>
        <dbReference type="HAMAP-Rule" id="MF_00050"/>
    </source>
</evidence>